<protein>
    <recommendedName>
        <fullName evidence="1 6">Ribosomal protein L11 methyltransferase</fullName>
        <shortName evidence="1 7">L11 Mtase</shortName>
        <ecNumber evidence="1 8 9">2.1.1.-</ecNumber>
    </recommendedName>
</protein>
<accession>P0A8T1</accession>
<accession>P28637</accession>
<accession>P76680</accession>
<accession>P76681</accession>
<accession>Q2M8V6</accession>
<feature type="chain" id="PRO_0000192257" description="Ribosomal protein L11 methyltransferase">
    <location>
        <begin position="1"/>
        <end position="293"/>
    </location>
</feature>
<feature type="binding site" evidence="1">
    <location>
        <position position="145"/>
    </location>
    <ligand>
        <name>S-adenosyl-L-methionine</name>
        <dbReference type="ChEBI" id="CHEBI:59789"/>
    </ligand>
</feature>
<feature type="binding site" evidence="1">
    <location>
        <position position="166"/>
    </location>
    <ligand>
        <name>S-adenosyl-L-methionine</name>
        <dbReference type="ChEBI" id="CHEBI:59789"/>
    </ligand>
</feature>
<feature type="binding site" evidence="1">
    <location>
        <position position="188"/>
    </location>
    <ligand>
        <name>S-adenosyl-L-methionine</name>
        <dbReference type="ChEBI" id="CHEBI:59789"/>
    </ligand>
</feature>
<feature type="binding site" evidence="1">
    <location>
        <position position="230"/>
    </location>
    <ligand>
        <name>S-adenosyl-L-methionine</name>
        <dbReference type="ChEBI" id="CHEBI:59789"/>
    </ligand>
</feature>
<feature type="mutagenesis site" description="Great decrease in activity." evidence="4">
    <original>W</original>
    <variation>R</variation>
    <location>
        <position position="285"/>
    </location>
</feature>
<feature type="sequence conflict" description="In Ref. 1; AAB28769." evidence="7" ref="1">
    <original>L</original>
    <variation>S</variation>
    <location>
        <position position="78"/>
    </location>
</feature>
<gene>
    <name evidence="1 5" type="primary">prmA</name>
    <name type="synonym">yhdI</name>
    <name type="ordered locus">b3259</name>
    <name type="ordered locus">JW3227</name>
</gene>
<comment type="function">
    <text evidence="1 3 4">Methylates ribosomal protein L11.</text>
</comment>
<comment type="catalytic activity">
    <reaction evidence="1 8 9">
        <text>L-lysyl-[protein] + 3 S-adenosyl-L-methionine = N(6),N(6),N(6)-trimethyl-L-lysyl-[protein] + 3 S-adenosyl-L-homocysteine + 3 H(+)</text>
        <dbReference type="Rhea" id="RHEA:54192"/>
        <dbReference type="Rhea" id="RHEA-COMP:9752"/>
        <dbReference type="Rhea" id="RHEA-COMP:13826"/>
        <dbReference type="ChEBI" id="CHEBI:15378"/>
        <dbReference type="ChEBI" id="CHEBI:29969"/>
        <dbReference type="ChEBI" id="CHEBI:57856"/>
        <dbReference type="ChEBI" id="CHEBI:59789"/>
        <dbReference type="ChEBI" id="CHEBI:61961"/>
    </reaction>
</comment>
<comment type="catalytic activity">
    <reaction evidence="8 9">
        <text>an N-terminal L-alpha-aminoacyl-[protein] + 3 S-adenosyl-L-methionine = an N-terminal trimethyl-L-alpha-aminoacyl-[protein] + 3 S-adenosyl-L-homocysteine + 3 H(+)</text>
        <dbReference type="Rhea" id="RHEA:62916"/>
        <dbReference type="Rhea" id="RHEA-COMP:10636"/>
        <dbReference type="Rhea" id="RHEA-COMP:16230"/>
        <dbReference type="ChEBI" id="CHEBI:15378"/>
        <dbReference type="ChEBI" id="CHEBI:57856"/>
        <dbReference type="ChEBI" id="CHEBI:59789"/>
        <dbReference type="ChEBI" id="CHEBI:78597"/>
        <dbReference type="ChEBI" id="CHEBI:146135"/>
    </reaction>
</comment>
<comment type="interaction">
    <interactant intactId="EBI-556300">
        <id>P0A8T1</id>
    </interactant>
    <interactant intactId="EBI-547288">
        <id>P0A7J7</id>
        <label>rplK</label>
    </interactant>
    <organismsDiffer>false</organismsDiffer>
    <experiments>4</experiments>
</comment>
<comment type="subcellular location">
    <subcellularLocation>
        <location evidence="1 7">Cytoplasm</location>
    </subcellularLocation>
</comment>
<comment type="disruption phenotype">
    <text evidence="2 3 4">Mutant lacks several methyl groups in protein L11 (PubMed:331082, PubMed:372746). Null mutant is perfectly viable (PubMed:331082, PubMed:7715456).</text>
</comment>
<comment type="similarity">
    <text evidence="1 7">Belongs to the methyltransferase superfamily. PrmA family.</text>
</comment>
<keyword id="KW-0963">Cytoplasm</keyword>
<keyword id="KW-0489">Methyltransferase</keyword>
<keyword id="KW-1185">Reference proteome</keyword>
<keyword id="KW-0949">S-adenosyl-L-methionine</keyword>
<keyword id="KW-0808">Transferase</keyword>
<dbReference type="EC" id="2.1.1.-" evidence="1 8 9"/>
<dbReference type="EMBL" id="S67010">
    <property type="protein sequence ID" value="AAB28769.1"/>
    <property type="molecule type" value="Genomic_DNA"/>
</dbReference>
<dbReference type="EMBL" id="U18997">
    <property type="protein sequence ID" value="AAA58062.1"/>
    <property type="status" value="ALT_FRAME"/>
    <property type="molecule type" value="Genomic_DNA"/>
</dbReference>
<dbReference type="EMBL" id="U18997">
    <property type="protein sequence ID" value="AAA58063.1"/>
    <property type="status" value="ALT_FRAME"/>
    <property type="molecule type" value="Genomic_DNA"/>
</dbReference>
<dbReference type="EMBL" id="U00096">
    <property type="protein sequence ID" value="AAC76291.1"/>
    <property type="molecule type" value="Genomic_DNA"/>
</dbReference>
<dbReference type="EMBL" id="AP009048">
    <property type="protein sequence ID" value="BAE77300.1"/>
    <property type="molecule type" value="Genomic_DNA"/>
</dbReference>
<dbReference type="EMBL" id="M30953">
    <property type="status" value="NOT_ANNOTATED_CDS"/>
    <property type="molecule type" value="Genomic_DNA"/>
</dbReference>
<dbReference type="EMBL" id="M95784">
    <property type="protein sequence ID" value="AAA23781.1"/>
    <property type="molecule type" value="Genomic_DNA"/>
</dbReference>
<dbReference type="PIR" id="E65118">
    <property type="entry name" value="E65118"/>
</dbReference>
<dbReference type="RefSeq" id="NP_417725.1">
    <property type="nucleotide sequence ID" value="NC_000913.3"/>
</dbReference>
<dbReference type="RefSeq" id="WP_001145827.1">
    <property type="nucleotide sequence ID" value="NZ_SSZK01000034.1"/>
</dbReference>
<dbReference type="SMR" id="P0A8T1"/>
<dbReference type="BioGRID" id="4261866">
    <property type="interactions" value="45"/>
</dbReference>
<dbReference type="BioGRID" id="852021">
    <property type="interactions" value="1"/>
</dbReference>
<dbReference type="DIP" id="DIP-47862N"/>
<dbReference type="FunCoup" id="P0A8T1">
    <property type="interactions" value="570"/>
</dbReference>
<dbReference type="IntAct" id="P0A8T1">
    <property type="interactions" value="14"/>
</dbReference>
<dbReference type="STRING" id="511145.b3259"/>
<dbReference type="jPOST" id="P0A8T1"/>
<dbReference type="PaxDb" id="511145-b3259"/>
<dbReference type="EnsemblBacteria" id="AAC76291">
    <property type="protein sequence ID" value="AAC76291"/>
    <property type="gene ID" value="b3259"/>
</dbReference>
<dbReference type="GeneID" id="75206107"/>
<dbReference type="GeneID" id="947708"/>
<dbReference type="KEGG" id="ecj:JW3227"/>
<dbReference type="KEGG" id="eco:b3259"/>
<dbReference type="KEGG" id="ecoc:C3026_17730"/>
<dbReference type="PATRIC" id="fig|1411691.4.peg.3469"/>
<dbReference type="EchoBASE" id="EB1460"/>
<dbReference type="eggNOG" id="COG2264">
    <property type="taxonomic scope" value="Bacteria"/>
</dbReference>
<dbReference type="HOGENOM" id="CLU_049382_4_1_6"/>
<dbReference type="InParanoid" id="P0A8T1"/>
<dbReference type="OMA" id="MYYEFFF"/>
<dbReference type="OrthoDB" id="9785995at2"/>
<dbReference type="PhylomeDB" id="P0A8T1"/>
<dbReference type="BioCyc" id="EcoCyc:EG11497-MONOMER"/>
<dbReference type="BioCyc" id="MetaCyc:EG11497-MONOMER"/>
<dbReference type="BRENDA" id="2.1.1.244">
    <property type="organism ID" value="2026"/>
</dbReference>
<dbReference type="PRO" id="PR:P0A8T1"/>
<dbReference type="Proteomes" id="UP000000625">
    <property type="component" value="Chromosome"/>
</dbReference>
<dbReference type="GO" id="GO:0005829">
    <property type="term" value="C:cytosol"/>
    <property type="evidence" value="ECO:0000314"/>
    <property type="project" value="EcoCyc"/>
</dbReference>
<dbReference type="GO" id="GO:0071885">
    <property type="term" value="F:N-terminal protein N-methyltransferase activity"/>
    <property type="evidence" value="ECO:0000315"/>
    <property type="project" value="EcoCyc"/>
</dbReference>
<dbReference type="GO" id="GO:0016279">
    <property type="term" value="F:protein-lysine N-methyltransferase activity"/>
    <property type="evidence" value="ECO:0000314"/>
    <property type="project" value="EcoCyc"/>
</dbReference>
<dbReference type="GO" id="GO:0032259">
    <property type="term" value="P:methylation"/>
    <property type="evidence" value="ECO:0007669"/>
    <property type="project" value="UniProtKB-KW"/>
</dbReference>
<dbReference type="CDD" id="cd02440">
    <property type="entry name" value="AdoMet_MTases"/>
    <property type="match status" value="1"/>
</dbReference>
<dbReference type="FunFam" id="3.40.50.150:FF:000021">
    <property type="entry name" value="Ribosomal protein L11 methyltransferase"/>
    <property type="match status" value="1"/>
</dbReference>
<dbReference type="Gene3D" id="3.40.50.150">
    <property type="entry name" value="Vaccinia Virus protein VP39"/>
    <property type="match status" value="1"/>
</dbReference>
<dbReference type="HAMAP" id="MF_00735">
    <property type="entry name" value="Methyltr_PrmA"/>
    <property type="match status" value="1"/>
</dbReference>
<dbReference type="InterPro" id="IPR050078">
    <property type="entry name" value="Ribosomal_L11_MeTrfase_PrmA"/>
</dbReference>
<dbReference type="InterPro" id="IPR004498">
    <property type="entry name" value="Ribosomal_PrmA_MeTrfase"/>
</dbReference>
<dbReference type="InterPro" id="IPR029063">
    <property type="entry name" value="SAM-dependent_MTases_sf"/>
</dbReference>
<dbReference type="NCBIfam" id="TIGR00406">
    <property type="entry name" value="prmA"/>
    <property type="match status" value="1"/>
</dbReference>
<dbReference type="PANTHER" id="PTHR43648">
    <property type="entry name" value="ELECTRON TRANSFER FLAVOPROTEIN BETA SUBUNIT LYSINE METHYLTRANSFERASE"/>
    <property type="match status" value="1"/>
</dbReference>
<dbReference type="PANTHER" id="PTHR43648:SF1">
    <property type="entry name" value="ELECTRON TRANSFER FLAVOPROTEIN BETA SUBUNIT LYSINE METHYLTRANSFERASE"/>
    <property type="match status" value="1"/>
</dbReference>
<dbReference type="Pfam" id="PF06325">
    <property type="entry name" value="PrmA"/>
    <property type="match status" value="1"/>
</dbReference>
<dbReference type="PIRSF" id="PIRSF000401">
    <property type="entry name" value="RPL11_MTase"/>
    <property type="match status" value="1"/>
</dbReference>
<dbReference type="SUPFAM" id="SSF53335">
    <property type="entry name" value="S-adenosyl-L-methionine-dependent methyltransferases"/>
    <property type="match status" value="1"/>
</dbReference>
<reference key="1">
    <citation type="journal article" date="1993" name="J. Bacteriol.">
        <title>Cotranscription of two genes necessary for ribosomal protein L11 methylation (prmA) and pantothenate transport (panF) in Escherichia coli K-12.</title>
        <authorList>
            <person name="Vanet A."/>
            <person name="Plumbridge J.A."/>
            <person name="Alix J.-H."/>
        </authorList>
    </citation>
    <scope>NUCLEOTIDE SEQUENCE [GENOMIC DNA]</scope>
</reference>
<reference key="2">
    <citation type="journal article" date="1997" name="Science">
        <title>The complete genome sequence of Escherichia coli K-12.</title>
        <authorList>
            <person name="Blattner F.R."/>
            <person name="Plunkett G. III"/>
            <person name="Bloch C.A."/>
            <person name="Perna N.T."/>
            <person name="Burland V."/>
            <person name="Riley M."/>
            <person name="Collado-Vides J."/>
            <person name="Glasner J.D."/>
            <person name="Rode C.K."/>
            <person name="Mayhew G.F."/>
            <person name="Gregor J."/>
            <person name="Davis N.W."/>
            <person name="Kirkpatrick H.A."/>
            <person name="Goeden M.A."/>
            <person name="Rose D.J."/>
            <person name="Mau B."/>
            <person name="Shao Y."/>
        </authorList>
    </citation>
    <scope>NUCLEOTIDE SEQUENCE [LARGE SCALE GENOMIC DNA]</scope>
    <source>
        <strain>K12 / MG1655 / ATCC 47076</strain>
    </source>
</reference>
<reference key="3">
    <citation type="journal article" date="2006" name="Mol. Syst. Biol.">
        <title>Highly accurate genome sequences of Escherichia coli K-12 strains MG1655 and W3110.</title>
        <authorList>
            <person name="Hayashi K."/>
            <person name="Morooka N."/>
            <person name="Yamamoto Y."/>
            <person name="Fujita K."/>
            <person name="Isono K."/>
            <person name="Choi S."/>
            <person name="Ohtsubo E."/>
            <person name="Baba T."/>
            <person name="Wanner B.L."/>
            <person name="Mori H."/>
            <person name="Horiuchi T."/>
        </authorList>
    </citation>
    <scope>NUCLEOTIDE SEQUENCE [LARGE SCALE GENOMIC DNA]</scope>
    <source>
        <strain>K12 / W3110 / ATCC 27325 / DSM 5911</strain>
    </source>
</reference>
<reference key="4">
    <citation type="journal article" date="1990" name="J. Bacteriol.">
        <title>Cloning, sequence, and expression of the pantothenate permease (panF) gene of Escherichia coli.</title>
        <authorList>
            <person name="Jackowski S."/>
            <person name="Alix J.-H."/>
        </authorList>
    </citation>
    <scope>NUCLEOTIDE SEQUENCE [GENOMIC DNA] OF 1-4</scope>
    <source>
        <strain>K12</strain>
    </source>
</reference>
<reference key="5">
    <citation type="journal article" date="1992" name="J. Bacteriol.">
        <title>Dramatic changes in Fis levels upon nutrient upshift in Escherichia coli.</title>
        <authorList>
            <person name="Ball C.A."/>
            <person name="Osuna R."/>
            <person name="Ferguson K.C."/>
            <person name="Johnson R.C."/>
        </authorList>
    </citation>
    <scope>NUCLEOTIDE SEQUENCE [GENOMIC DNA] OF 140-293</scope>
</reference>
<reference key="6">
    <citation type="journal article" date="1994" name="Mol. Microbiol.">
        <title>Ribosomal protein methylation in Escherichia coli: the gene prmA, encoding the ribosomal protein L11 methyltransferase, is dispensable.</title>
        <authorList>
            <person name="Vanet A."/>
            <person name="Plumbridge J.A."/>
            <person name="Guerin M.F."/>
            <person name="Alix J.-H."/>
        </authorList>
    </citation>
    <scope>NUCLEOTIDE SEQUENCE [GENOMIC DNA] OF 279-293</scope>
    <scope>FUNCTION</scope>
    <scope>CATALYTIC ACTIVITY</scope>
    <scope>DISRUPTION PHENOTYPE</scope>
    <scope>MUTAGENESIS OF TRP-285</scope>
</reference>
<reference key="7">
    <citation type="journal article" date="1977" name="Mol. Gen. Genet.">
        <title>Genetics of ribosomal protein methylation in Escherichia coli. I. A mutant deficient in methylation of protein L11.</title>
        <authorList>
            <person name="Colson C."/>
        </authorList>
    </citation>
    <scope>DISRUPTION PHENOTYPE</scope>
</reference>
<reference key="8">
    <citation type="journal article" date="1979" name="Mol. Gen. Genet.">
        <title>Genetics of ribosomal protein methylation in Escherichia coli. III. Map position of two genes, prmA and prmB, governing methylation of proteins L11 and L3.</title>
        <authorList>
            <person name="Colson C."/>
            <person name="Lhoest J."/>
            <person name="Urlings C."/>
        </authorList>
    </citation>
    <scope>FUNCTION</scope>
    <scope>CATALYTIC ACTIVITY</scope>
    <scope>DISRUPTION PHENOTYPE</scope>
    <source>
        <strain>K12</strain>
    </source>
</reference>
<name>PRMA_ECOLI</name>
<sequence>MPWIQLKLNTTGANAEDLSDALMEAGAVSITFQDTHDTPVFEPLPGETRLWGDTDVIGLFDAETDMNDVVAILENHPLLGAGFAHKIEQLEDKDWEREWMDNFHPMRFGERLWICPSWRDVPDENAVNVMLDPGLAFGTGTHPTTSLCLQWLDSLDLTGKTVIDFGCGSGILAIAALKLGAAKAIGIDIDPQAIQASRDNAERNGVSDRLELYLPKDQPEEMKADVVVANILAGPLRELAPLISVLPVSGGLLGLSGILASQAESVCEAYADSFALDPVVEKEEWCRITGRKN</sequence>
<evidence type="ECO:0000255" key="1">
    <source>
        <dbReference type="HAMAP-Rule" id="MF_00735"/>
    </source>
</evidence>
<evidence type="ECO:0000269" key="2">
    <source>
    </source>
</evidence>
<evidence type="ECO:0000269" key="3">
    <source>
    </source>
</evidence>
<evidence type="ECO:0000269" key="4">
    <source>
    </source>
</evidence>
<evidence type="ECO:0000303" key="5">
    <source>
    </source>
</evidence>
<evidence type="ECO:0000303" key="6">
    <source>
    </source>
</evidence>
<evidence type="ECO:0000305" key="7"/>
<evidence type="ECO:0000305" key="8">
    <source>
    </source>
</evidence>
<evidence type="ECO:0000305" key="9">
    <source>
    </source>
</evidence>
<organism>
    <name type="scientific">Escherichia coli (strain K12)</name>
    <dbReference type="NCBI Taxonomy" id="83333"/>
    <lineage>
        <taxon>Bacteria</taxon>
        <taxon>Pseudomonadati</taxon>
        <taxon>Pseudomonadota</taxon>
        <taxon>Gammaproteobacteria</taxon>
        <taxon>Enterobacterales</taxon>
        <taxon>Enterobacteriaceae</taxon>
        <taxon>Escherichia</taxon>
    </lineage>
</organism>
<proteinExistence type="evidence at protein level"/>